<proteinExistence type="evidence at protein level"/>
<accession>P0ACG1</accession>
<accession>P30017</accession>
<reference key="1">
    <citation type="journal article" date="1992" name="Nucleic Acids Res.">
        <title>Nucleotide sequence of a newly-identified Escherichia coli gene, stpA, encoding an H-NS-like protein.</title>
        <authorList>
            <person name="Zhang A."/>
            <person name="Belfort M."/>
        </authorList>
    </citation>
    <scope>NUCLEOTIDE SEQUENCE [GENOMIC DNA]</scope>
    <scope>FUNCTION</scope>
    <source>
        <strain>K12</strain>
    </source>
</reference>
<reference key="2">
    <citation type="journal article" date="1994" name="J. Bacteriol.">
        <title>Plasmids bearing hfq and the hns-like gene stpA complement hns mutants in modulating arginine decarboxylase gene expression in Escherichia coli.</title>
        <authorList>
            <person name="Shi X."/>
            <person name="Bennett G.N."/>
        </authorList>
    </citation>
    <scope>NUCLEOTIDE SEQUENCE [GENOMIC DNA]</scope>
    <source>
        <strain>K12</strain>
    </source>
</reference>
<reference key="3">
    <citation type="journal article" date="1997" name="DNA Res.">
        <title>Construction of a contiguous 874-kb sequence of the Escherichia coli-K12 genome corresponding to 50.0-68.8 min on the linkage map and analysis of its sequence features.</title>
        <authorList>
            <person name="Yamamoto Y."/>
            <person name="Aiba H."/>
            <person name="Baba T."/>
            <person name="Hayashi K."/>
            <person name="Inada T."/>
            <person name="Isono K."/>
            <person name="Itoh T."/>
            <person name="Kimura S."/>
            <person name="Kitagawa M."/>
            <person name="Makino K."/>
            <person name="Miki T."/>
            <person name="Mitsuhashi N."/>
            <person name="Mizobuchi K."/>
            <person name="Mori H."/>
            <person name="Nakade S."/>
            <person name="Nakamura Y."/>
            <person name="Nashimoto H."/>
            <person name="Oshima T."/>
            <person name="Oyama S."/>
            <person name="Saito N."/>
            <person name="Sampei G."/>
            <person name="Satoh Y."/>
            <person name="Sivasundaram S."/>
            <person name="Tagami H."/>
            <person name="Takahashi H."/>
            <person name="Takeda J."/>
            <person name="Takemoto K."/>
            <person name="Uehara K."/>
            <person name="Wada C."/>
            <person name="Yamagata S."/>
            <person name="Horiuchi T."/>
        </authorList>
    </citation>
    <scope>NUCLEOTIDE SEQUENCE [LARGE SCALE GENOMIC DNA]</scope>
    <source>
        <strain>K12 / W3110 / ATCC 27325 / DSM 5911</strain>
    </source>
</reference>
<reference key="4">
    <citation type="journal article" date="1997" name="Science">
        <title>The complete genome sequence of Escherichia coli K-12.</title>
        <authorList>
            <person name="Blattner F.R."/>
            <person name="Plunkett G. III"/>
            <person name="Bloch C.A."/>
            <person name="Perna N.T."/>
            <person name="Burland V."/>
            <person name="Riley M."/>
            <person name="Collado-Vides J."/>
            <person name="Glasner J.D."/>
            <person name="Rode C.K."/>
            <person name="Mayhew G.F."/>
            <person name="Gregor J."/>
            <person name="Davis N.W."/>
            <person name="Kirkpatrick H.A."/>
            <person name="Goeden M.A."/>
            <person name="Rose D.J."/>
            <person name="Mau B."/>
            <person name="Shao Y."/>
        </authorList>
    </citation>
    <scope>NUCLEOTIDE SEQUENCE [LARGE SCALE GENOMIC DNA]</scope>
    <source>
        <strain>K12 / MG1655 / ATCC 47076</strain>
    </source>
</reference>
<reference key="5">
    <citation type="journal article" date="2006" name="Mol. Syst. Biol.">
        <title>Highly accurate genome sequences of Escherichia coli K-12 strains MG1655 and W3110.</title>
        <authorList>
            <person name="Hayashi K."/>
            <person name="Morooka N."/>
            <person name="Yamamoto Y."/>
            <person name="Fujita K."/>
            <person name="Isono K."/>
            <person name="Choi S."/>
            <person name="Ohtsubo E."/>
            <person name="Baba T."/>
            <person name="Wanner B.L."/>
            <person name="Mori H."/>
            <person name="Horiuchi T."/>
        </authorList>
    </citation>
    <scope>NUCLEOTIDE SEQUENCE [LARGE SCALE GENOMIC DNA]</scope>
    <source>
        <strain>K12 / W3110 / ATCC 27325 / DSM 5911</strain>
    </source>
</reference>
<reference key="6">
    <citation type="journal article" date="1996" name="EMBO J.">
        <title>Coordinated and differential expression of histone-like proteins in Escherichia coli: regulation and function of the H-NS analog StpA.</title>
        <authorList>
            <person name="Sonden B."/>
            <person name="Uhlin B.E."/>
        </authorList>
    </citation>
    <scope>NUCLEOTIDE SEQUENCE [GENOMIC DNA] OF 1-21</scope>
    <scope>FUNCTION</scope>
    <scope>INDUCTION</scope>
    <scope>DISRUPTION PHENOTYPE</scope>
    <source>
        <strain>K12</strain>
        <strain>K12 / MC1029</strain>
        <strain>K12 / MC4100 / ATCC 35695 / DSM 6574</strain>
    </source>
</reference>
<reference key="7">
    <citation type="journal article" date="1996" name="J. Bacteriol.">
        <title>Probing the structure, function, and interactions of the Escherichia coli H-NS and StpA proteins by using dominant negative derivatives.</title>
        <authorList>
            <person name="Williams R.M."/>
            <person name="Rimsky S."/>
            <person name="Buc H."/>
        </authorList>
    </citation>
    <scope>FUNCTION</scope>
    <scope>SUBUNIT</scope>
    <scope>MUTAGENESIS OF LEU-26; 65-MET--ILE-134; TYR-97 AND PRO-116</scope>
</reference>
<reference key="8">
    <citation type="journal article" date="2007" name="Nucleic Acids Res.">
        <title>RNA chaperone activity and RNA-binding properties of the E. coli protein StpA.</title>
        <authorList>
            <person name="Mayer O."/>
            <person name="Rajkowitsch L."/>
            <person name="Lorenz C."/>
            <person name="Konrat R."/>
            <person name="Schroeder R."/>
        </authorList>
    </citation>
    <scope>FUNCTION (MICROBIAL INFECTION)</scope>
    <scope>DOMAIN</scope>
    <scope>RNA-BINDING</scope>
    <scope>MUTAGENESIS OF GLY-126</scope>
</reference>
<reference key="9">
    <citation type="journal article" date="2011" name="Science">
        <title>Chromosome organization by a nucleoid-associated protein in live bacteria.</title>
        <authorList>
            <person name="Wang W."/>
            <person name="Li G.W."/>
            <person name="Chen C."/>
            <person name="Xie X.S."/>
            <person name="Zhuang X."/>
        </authorList>
    </citation>
    <scope>SUBCELLULAR LOCATION</scope>
    <source>
        <strain>K12 / BW25993</strain>
    </source>
</reference>
<reference key="10">
    <citation type="journal article" date="2013" name="DNA Res.">
        <title>Functions of the Hha and YdgT proteins in transcriptional silencing by the nucleoid proteins, H-NS and StpA, in Escherichia coli.</title>
        <authorList>
            <person name="Ueda T."/>
            <person name="Takahashi H."/>
            <person name="Uyar E."/>
            <person name="Ishikawa S."/>
            <person name="Ogasawara N."/>
            <person name="Oshima T."/>
        </authorList>
    </citation>
    <scope>FUNCTION</scope>
    <scope>REGULON</scope>
    <scope>DISRUPTION PHENOTYPE</scope>
    <source>
        <strain>K12 / W3110 / ATCC 27325 / DSM 5911</strain>
    </source>
</reference>
<reference key="11">
    <citation type="submission" date="2012-04" db="PDB data bank">
        <title>Chaperones modulate RNA structural dynamics through anti-folding.</title>
        <authorList>
            <person name="Fuertig B."/>
            <person name="Doetsch M."/>
            <person name="Stampfl S."/>
            <person name="Kontaxis G."/>
            <person name="Schroeder R."/>
        </authorList>
    </citation>
    <scope>STRUCTURE BY NMR OF 90-134</scope>
</reference>
<comment type="function">
    <text evidence="6 7 8">A DNA-binding protein that acts in a fashion similar to H-NS protein upon overexpression, represses a number of genes including the cryptic blg operon, hns, papB and the proU locus (PubMed:8890170). A subset of H-NS/StpA-regulated genes also require Hha for repression; Hha and Cnu (YdgT) increases the number of genes DNA bound by H-NS/StpA and may also modulate the oligomerization of the H-NS/StpA-complex (PubMed:23543115). Repression can be inhibited by dominant-negative mutants of StpA or H-NS (PubMed:8755860).</text>
</comment>
<comment type="function">
    <text evidence="3 4">(Microbial infection) Originally isolated as a suppressor of a splicing defect of the thymidylate synthase (td) gene from bacteriophage T4 (PubMed:1480493). Acts as an RNA chaperone, accelerating splicing of viral pre-mRNA. Binds preferentially to unstructured over structured RNA; does not have a detectable high-affinity RNA-binding site in the pre-mRNA. There do not seem to be any specific RNA targets in transcribed E.coli DNA (PubMed:17267410).</text>
</comment>
<comment type="subunit">
    <text evidence="7 10">When overexpressed forms homodimers, can interact with the N-terminus (residues 1-64) of H-NS (PubMed:8755860). May interact with Hha and/or Cnu.</text>
</comment>
<comment type="interaction">
    <interactant intactId="EBI-551928">
        <id>P0ACG1</id>
    </interactant>
    <interactant intactId="EBI-544934">
        <id>P0ACF8</id>
        <label>hns</label>
    </interactant>
    <organismsDiffer>false</organismsDiffer>
    <experiments>4</experiments>
</comment>
<comment type="subcellular location">
    <subcellularLocation>
        <location evidence="5">Cytoplasm</location>
        <location evidence="5">Nucleoid</location>
    </subcellularLocation>
    <text evidence="5">Scattered throughout the nucleoid (PubMed:21903814).</text>
</comment>
<comment type="induction">
    <text evidence="8">Expressed at low levels at 37 degrees Celsius, barely detectable at 26 degrees Celsius; expression is repressed by hns and partially activated by lrp (PubMed:8890170).</text>
</comment>
<comment type="domain">
    <text evidence="4">Both the N-terminus (residues 1-76) and the C-terminus (residues 90-134) have RNA chaperone activity for splicing of td, a bacteriophage T4 pre-mRNA (PubMed:17267410).</text>
</comment>
<comment type="disruption phenotype">
    <text evidence="6 8">No visible phenotype in rich medium; double hns-stpA mutants grow slower and have reduced viable cell counts compared to single hns mutants in MC1029 and MC4100 backgrounds (PubMed:8890170). In 0.3M NaCl a double hns-stpA deletion up-regulates 583 and down-regulates 86 genes, 363 of which are thought to have been horizontally acquired; 131 are also up-regulated in a double cnu-hha deletion (PubMed:23543115).</text>
</comment>
<comment type="similarity">
    <text evidence="10">Belongs to the histone-like protein H-NS family.</text>
</comment>
<sequence>MSVMLQSLNNIRTLRAMAREFSIDVLEEMLEKFRVVTKERREEEEQQQRELAERQEKISTWLELMKADGINPEELLGNSSAAAPRAGKKRQPRPAKYKFTDVNGETKTWTGQGRTPKPIAQALAEGKSLDDFLI</sequence>
<name>STPA_ECOLI</name>
<evidence type="ECO:0000250" key="1">
    <source>
        <dbReference type="UniProtKB" id="P0A1S2"/>
    </source>
</evidence>
<evidence type="ECO:0000256" key="2">
    <source>
        <dbReference type="SAM" id="MobiDB-lite"/>
    </source>
</evidence>
<evidence type="ECO:0000269" key="3">
    <source>
    </source>
</evidence>
<evidence type="ECO:0000269" key="4">
    <source>
    </source>
</evidence>
<evidence type="ECO:0000269" key="5">
    <source>
    </source>
</evidence>
<evidence type="ECO:0000269" key="6">
    <source>
    </source>
</evidence>
<evidence type="ECO:0000269" key="7">
    <source>
    </source>
</evidence>
<evidence type="ECO:0000269" key="8">
    <source>
    </source>
</evidence>
<evidence type="ECO:0000303" key="9">
    <source>
    </source>
</evidence>
<evidence type="ECO:0000305" key="10"/>
<evidence type="ECO:0007829" key="11">
    <source>
        <dbReference type="PDB" id="2LRX"/>
    </source>
</evidence>
<dbReference type="EMBL" id="X69210">
    <property type="protein sequence ID" value="CAA49146.1"/>
    <property type="molecule type" value="Genomic_DNA"/>
</dbReference>
<dbReference type="EMBL" id="U07823">
    <property type="protein sequence ID" value="AAA64940.1"/>
    <property type="molecule type" value="Genomic_DNA"/>
</dbReference>
<dbReference type="EMBL" id="U00096">
    <property type="protein sequence ID" value="AAC75716.1"/>
    <property type="molecule type" value="Genomic_DNA"/>
</dbReference>
<dbReference type="EMBL" id="AP009048">
    <property type="protein sequence ID" value="BAA16535.1"/>
    <property type="molecule type" value="Genomic_DNA"/>
</dbReference>
<dbReference type="PIR" id="JH0774">
    <property type="entry name" value="JH0774"/>
</dbReference>
<dbReference type="RefSeq" id="NP_417155.1">
    <property type="nucleotide sequence ID" value="NC_000913.3"/>
</dbReference>
<dbReference type="RefSeq" id="WP_000115383.1">
    <property type="nucleotide sequence ID" value="NZ_STEB01000042.1"/>
</dbReference>
<dbReference type="PDB" id="2LRX">
    <property type="method" value="NMR"/>
    <property type="chains" value="A=90-134"/>
</dbReference>
<dbReference type="PDBsum" id="2LRX"/>
<dbReference type="BMRB" id="P0ACG1"/>
<dbReference type="SMR" id="P0ACG1"/>
<dbReference type="BioGRID" id="4262261">
    <property type="interactions" value="205"/>
</dbReference>
<dbReference type="BioGRID" id="851464">
    <property type="interactions" value="2"/>
</dbReference>
<dbReference type="DIP" id="DIP-35951N"/>
<dbReference type="FunCoup" id="P0ACG1">
    <property type="interactions" value="163"/>
</dbReference>
<dbReference type="IntAct" id="P0ACG1">
    <property type="interactions" value="24"/>
</dbReference>
<dbReference type="STRING" id="511145.b2669"/>
<dbReference type="jPOST" id="P0ACG1"/>
<dbReference type="PaxDb" id="511145-b2669"/>
<dbReference type="EnsemblBacteria" id="AAC75716">
    <property type="protein sequence ID" value="AAC75716"/>
    <property type="gene ID" value="b2669"/>
</dbReference>
<dbReference type="GeneID" id="93779342"/>
<dbReference type="GeneID" id="947130"/>
<dbReference type="KEGG" id="ecj:JW2644"/>
<dbReference type="KEGG" id="eco:b2669"/>
<dbReference type="KEGG" id="ecoc:C3026_14710"/>
<dbReference type="PATRIC" id="fig|1411691.4.peg.4072"/>
<dbReference type="EchoBASE" id="EB1515"/>
<dbReference type="eggNOG" id="COG2916">
    <property type="taxonomic scope" value="Bacteria"/>
</dbReference>
<dbReference type="HOGENOM" id="CLU_117503_0_0_6"/>
<dbReference type="InParanoid" id="P0ACG1"/>
<dbReference type="OMA" id="NTWLELM"/>
<dbReference type="OrthoDB" id="6088948at2"/>
<dbReference type="PhylomeDB" id="P0ACG1"/>
<dbReference type="BioCyc" id="EcoCyc:EG11554-MONOMER"/>
<dbReference type="EvolutionaryTrace" id="P0ACG1"/>
<dbReference type="PRO" id="PR:P0ACG1"/>
<dbReference type="Proteomes" id="UP000000625">
    <property type="component" value="Chromosome"/>
</dbReference>
<dbReference type="GO" id="GO:0005829">
    <property type="term" value="C:cytosol"/>
    <property type="evidence" value="ECO:0000314"/>
    <property type="project" value="EcoCyc"/>
</dbReference>
<dbReference type="GO" id="GO:0009295">
    <property type="term" value="C:nucleoid"/>
    <property type="evidence" value="ECO:0007669"/>
    <property type="project" value="UniProtKB-SubCell"/>
</dbReference>
<dbReference type="GO" id="GO:0032993">
    <property type="term" value="C:protein-DNA complex"/>
    <property type="evidence" value="ECO:0000318"/>
    <property type="project" value="GO_Central"/>
</dbReference>
<dbReference type="GO" id="GO:0003681">
    <property type="term" value="F:bent DNA binding"/>
    <property type="evidence" value="ECO:0000318"/>
    <property type="project" value="GO_Central"/>
</dbReference>
<dbReference type="GO" id="GO:0003677">
    <property type="term" value="F:DNA binding"/>
    <property type="evidence" value="ECO:0000314"/>
    <property type="project" value="EcoliWiki"/>
</dbReference>
<dbReference type="GO" id="GO:0001217">
    <property type="term" value="F:DNA-binding transcription repressor activity"/>
    <property type="evidence" value="ECO:0000318"/>
    <property type="project" value="GO_Central"/>
</dbReference>
<dbReference type="GO" id="GO:0003680">
    <property type="term" value="F:minor groove of adenine-thymine-rich DNA binding"/>
    <property type="evidence" value="ECO:0000318"/>
    <property type="project" value="GO_Central"/>
</dbReference>
<dbReference type="GO" id="GO:0046983">
    <property type="term" value="F:protein dimerization activity"/>
    <property type="evidence" value="ECO:0007669"/>
    <property type="project" value="InterPro"/>
</dbReference>
<dbReference type="GO" id="GO:0003723">
    <property type="term" value="F:RNA binding"/>
    <property type="evidence" value="ECO:0007669"/>
    <property type="project" value="UniProtKB-KW"/>
</dbReference>
<dbReference type="GO" id="GO:0030527">
    <property type="term" value="F:structural constituent of chromatin"/>
    <property type="evidence" value="ECO:0007669"/>
    <property type="project" value="InterPro"/>
</dbReference>
<dbReference type="GO" id="GO:0000976">
    <property type="term" value="F:transcription cis-regulatory region binding"/>
    <property type="evidence" value="ECO:0000318"/>
    <property type="project" value="GO_Central"/>
</dbReference>
<dbReference type="FunFam" id="1.10.287.1050:FF:000001">
    <property type="entry name" value="DNA-binding protein"/>
    <property type="match status" value="1"/>
</dbReference>
<dbReference type="FunFam" id="4.10.430.10:FF:000001">
    <property type="entry name" value="DNA-binding protein"/>
    <property type="match status" value="1"/>
</dbReference>
<dbReference type="Gene3D" id="1.10.287.1050">
    <property type="entry name" value="H-NS histone-like proteins"/>
    <property type="match status" value="1"/>
</dbReference>
<dbReference type="Gene3D" id="4.10.430.10">
    <property type="entry name" value="Histone-like protein H-NS, C-terminal domain"/>
    <property type="match status" value="1"/>
</dbReference>
<dbReference type="InterPro" id="IPR054180">
    <property type="entry name" value="H-NS-like_N"/>
</dbReference>
<dbReference type="InterPro" id="IPR027444">
    <property type="entry name" value="H-NS_C_dom"/>
</dbReference>
<dbReference type="InterPro" id="IPR037150">
    <property type="entry name" value="H-NS_C_dom_sf"/>
</dbReference>
<dbReference type="InterPro" id="IPR001801">
    <property type="entry name" value="Histone_HNS"/>
</dbReference>
<dbReference type="InterPro" id="IPR027454">
    <property type="entry name" value="Histone_HNS_N"/>
</dbReference>
<dbReference type="NCBIfam" id="NF007656">
    <property type="entry name" value="PRK10328.1"/>
    <property type="match status" value="1"/>
</dbReference>
<dbReference type="PANTHER" id="PTHR38097">
    <property type="match status" value="1"/>
</dbReference>
<dbReference type="PANTHER" id="PTHR38097:SF2">
    <property type="entry name" value="DNA-BINDING PROTEIN STPA"/>
    <property type="match status" value="1"/>
</dbReference>
<dbReference type="Pfam" id="PF00816">
    <property type="entry name" value="Histone_HNS"/>
    <property type="match status" value="1"/>
</dbReference>
<dbReference type="Pfam" id="PF22470">
    <property type="entry name" value="Histone_HNS_N"/>
    <property type="match status" value="1"/>
</dbReference>
<dbReference type="PIRSF" id="PIRSF002096">
    <property type="entry name" value="HnS"/>
    <property type="match status" value="1"/>
</dbReference>
<dbReference type="SMART" id="SM00528">
    <property type="entry name" value="HNS"/>
    <property type="match status" value="1"/>
</dbReference>
<dbReference type="SUPFAM" id="SSF81273">
    <property type="entry name" value="H-NS histone-like proteins"/>
    <property type="match status" value="2"/>
</dbReference>
<keyword id="KW-0002">3D-structure</keyword>
<keyword id="KW-0143">Chaperone</keyword>
<keyword id="KW-0963">Cytoplasm</keyword>
<keyword id="KW-0238">DNA-binding</keyword>
<keyword id="KW-1185">Reference proteome</keyword>
<keyword id="KW-0694">RNA-binding</keyword>
<keyword id="KW-0804">Transcription</keyword>
<keyword id="KW-0805">Transcription regulation</keyword>
<organism>
    <name type="scientific">Escherichia coli (strain K12)</name>
    <dbReference type="NCBI Taxonomy" id="83333"/>
    <lineage>
        <taxon>Bacteria</taxon>
        <taxon>Pseudomonadati</taxon>
        <taxon>Pseudomonadota</taxon>
        <taxon>Gammaproteobacteria</taxon>
        <taxon>Enterobacterales</taxon>
        <taxon>Enterobacteriaceae</taxon>
        <taxon>Escherichia</taxon>
    </lineage>
</organism>
<protein>
    <recommendedName>
        <fullName>DNA-binding protein StpA</fullName>
    </recommendedName>
    <alternativeName>
        <fullName>H-NS homolog StpA</fullName>
    </alternativeName>
</protein>
<feature type="chain" id="PRO_0000168513" description="DNA-binding protein StpA">
    <location>
        <begin position="1"/>
        <end position="134"/>
    </location>
</feature>
<feature type="DNA-binding region" evidence="1">
    <location>
        <begin position="112"/>
        <end position="117"/>
    </location>
</feature>
<feature type="region of interest" description="Disordered" evidence="2">
    <location>
        <begin position="73"/>
        <end position="94"/>
    </location>
</feature>
<feature type="mutagenesis site" description="Partial loss of repressor function when overexpressed in the absence of hns." evidence="7">
    <original>L</original>
    <variation>P</variation>
    <location>
        <position position="26"/>
    </location>
</feature>
<feature type="mutagenesis site" description="Partial loss of repressor function when overexpressed in the absence of hns." evidence="7">
    <location>
        <begin position="65"/>
        <end position="134"/>
    </location>
</feature>
<feature type="mutagenesis site" description="Partial loss of repressor function when overexpressed in the absence of hns." evidence="7">
    <original>Y</original>
    <variation>C</variation>
    <location>
        <position position="97"/>
    </location>
</feature>
<feature type="mutagenesis site" description="Partial loss of repressor function when overexpressed in the absence of hns." evidence="7">
    <original>P</original>
    <variation>S</variation>
    <location>
        <position position="116"/>
    </location>
</feature>
<feature type="mutagenesis site" description="Higher RNA chaperone activity than wild-type, decreased ability to bind structured RNA." evidence="4">
    <original>G</original>
    <variation>V</variation>
    <location>
        <position position="126"/>
    </location>
</feature>
<feature type="helix" evidence="11">
    <location>
        <begin position="117"/>
        <end position="124"/>
    </location>
</feature>
<feature type="helix" evidence="11">
    <location>
        <begin position="129"/>
        <end position="131"/>
    </location>
</feature>
<gene>
    <name evidence="9" type="primary">stpA</name>
    <name type="synonym">hnsB</name>
    <name type="ordered locus">b2669</name>
    <name type="ordered locus">JW2644</name>
</gene>